<keyword id="KW-0479">Metal-binding</keyword>
<keyword id="KW-1185">Reference proteome</keyword>
<keyword id="KW-0687">Ribonucleoprotein</keyword>
<keyword id="KW-0689">Ribosomal protein</keyword>
<keyword id="KW-0694">RNA-binding</keyword>
<keyword id="KW-0699">rRNA-binding</keyword>
<keyword id="KW-0862">Zinc</keyword>
<gene>
    <name evidence="1" type="primary">rpmE</name>
    <name type="synonym">rpmE1</name>
    <name type="ordered locus">YPO0111</name>
    <name type="ordered locus">y0299</name>
    <name type="ordered locus">YP_0112</name>
</gene>
<accession>P58471</accession>
<accession>Q0WKI8</accession>
<evidence type="ECO:0000255" key="1">
    <source>
        <dbReference type="HAMAP-Rule" id="MF_00501"/>
    </source>
</evidence>
<evidence type="ECO:0000305" key="2"/>
<dbReference type="EMBL" id="AL590842">
    <property type="protein sequence ID" value="CAL18798.1"/>
    <property type="molecule type" value="Genomic_DNA"/>
</dbReference>
<dbReference type="EMBL" id="AE009952">
    <property type="protein sequence ID" value="AAM83891.1"/>
    <property type="status" value="ALT_INIT"/>
    <property type="molecule type" value="Genomic_DNA"/>
</dbReference>
<dbReference type="EMBL" id="AE017042">
    <property type="protein sequence ID" value="AAS60391.1"/>
    <property type="molecule type" value="Genomic_DNA"/>
</dbReference>
<dbReference type="PIR" id="AE0014">
    <property type="entry name" value="AE0014"/>
</dbReference>
<dbReference type="RefSeq" id="WP_002216737.1">
    <property type="nucleotide sequence ID" value="NZ_WUCM01000087.1"/>
</dbReference>
<dbReference type="RefSeq" id="YP_002345200.1">
    <property type="nucleotide sequence ID" value="NC_003143.1"/>
</dbReference>
<dbReference type="SMR" id="P58471"/>
<dbReference type="STRING" id="214092.YPO0111"/>
<dbReference type="PaxDb" id="214092-YPO0111"/>
<dbReference type="EnsemblBacteria" id="AAS60391">
    <property type="protein sequence ID" value="AAS60391"/>
    <property type="gene ID" value="YP_0112"/>
</dbReference>
<dbReference type="GeneID" id="96663581"/>
<dbReference type="KEGG" id="ype:YPO0111"/>
<dbReference type="KEGG" id="ypk:y0299"/>
<dbReference type="KEGG" id="ypm:YP_0112"/>
<dbReference type="PATRIC" id="fig|214092.21.peg.336"/>
<dbReference type="eggNOG" id="COG0254">
    <property type="taxonomic scope" value="Bacteria"/>
</dbReference>
<dbReference type="HOGENOM" id="CLU_114306_4_0_6"/>
<dbReference type="OMA" id="IHVDVWS"/>
<dbReference type="OrthoDB" id="9803251at2"/>
<dbReference type="Proteomes" id="UP000000815">
    <property type="component" value="Chromosome"/>
</dbReference>
<dbReference type="Proteomes" id="UP000001019">
    <property type="component" value="Chromosome"/>
</dbReference>
<dbReference type="Proteomes" id="UP000002490">
    <property type="component" value="Chromosome"/>
</dbReference>
<dbReference type="GO" id="GO:1990904">
    <property type="term" value="C:ribonucleoprotein complex"/>
    <property type="evidence" value="ECO:0007669"/>
    <property type="project" value="UniProtKB-KW"/>
</dbReference>
<dbReference type="GO" id="GO:0005840">
    <property type="term" value="C:ribosome"/>
    <property type="evidence" value="ECO:0007669"/>
    <property type="project" value="UniProtKB-KW"/>
</dbReference>
<dbReference type="GO" id="GO:0046872">
    <property type="term" value="F:metal ion binding"/>
    <property type="evidence" value="ECO:0007669"/>
    <property type="project" value="UniProtKB-KW"/>
</dbReference>
<dbReference type="GO" id="GO:0019843">
    <property type="term" value="F:rRNA binding"/>
    <property type="evidence" value="ECO:0007669"/>
    <property type="project" value="UniProtKB-KW"/>
</dbReference>
<dbReference type="GO" id="GO:0003735">
    <property type="term" value="F:structural constituent of ribosome"/>
    <property type="evidence" value="ECO:0007669"/>
    <property type="project" value="InterPro"/>
</dbReference>
<dbReference type="GO" id="GO:0006412">
    <property type="term" value="P:translation"/>
    <property type="evidence" value="ECO:0007669"/>
    <property type="project" value="UniProtKB-UniRule"/>
</dbReference>
<dbReference type="FunFam" id="4.10.830.30:FF:000001">
    <property type="entry name" value="50S ribosomal protein L31"/>
    <property type="match status" value="1"/>
</dbReference>
<dbReference type="Gene3D" id="4.10.830.30">
    <property type="entry name" value="Ribosomal protein L31"/>
    <property type="match status" value="1"/>
</dbReference>
<dbReference type="HAMAP" id="MF_00501">
    <property type="entry name" value="Ribosomal_bL31_1"/>
    <property type="match status" value="1"/>
</dbReference>
<dbReference type="InterPro" id="IPR034704">
    <property type="entry name" value="Ribosomal_bL28/bL31-like_sf"/>
</dbReference>
<dbReference type="InterPro" id="IPR002150">
    <property type="entry name" value="Ribosomal_bL31"/>
</dbReference>
<dbReference type="InterPro" id="IPR027491">
    <property type="entry name" value="Ribosomal_bL31_A"/>
</dbReference>
<dbReference type="InterPro" id="IPR042105">
    <property type="entry name" value="Ribosomal_bL31_sf"/>
</dbReference>
<dbReference type="NCBIfam" id="TIGR00105">
    <property type="entry name" value="L31"/>
    <property type="match status" value="1"/>
</dbReference>
<dbReference type="NCBIfam" id="NF000612">
    <property type="entry name" value="PRK00019.1"/>
    <property type="match status" value="1"/>
</dbReference>
<dbReference type="PANTHER" id="PTHR33280">
    <property type="entry name" value="50S RIBOSOMAL PROTEIN L31, CHLOROPLASTIC"/>
    <property type="match status" value="1"/>
</dbReference>
<dbReference type="PANTHER" id="PTHR33280:SF6">
    <property type="entry name" value="LARGE RIBOSOMAL SUBUNIT PROTEIN BL31A"/>
    <property type="match status" value="1"/>
</dbReference>
<dbReference type="Pfam" id="PF01197">
    <property type="entry name" value="Ribosomal_L31"/>
    <property type="match status" value="1"/>
</dbReference>
<dbReference type="PRINTS" id="PR01249">
    <property type="entry name" value="RIBOSOMALL31"/>
</dbReference>
<dbReference type="SUPFAM" id="SSF143800">
    <property type="entry name" value="L28p-like"/>
    <property type="match status" value="1"/>
</dbReference>
<dbReference type="PROSITE" id="PS01143">
    <property type="entry name" value="RIBOSOMAL_L31"/>
    <property type="match status" value="1"/>
</dbReference>
<comment type="function">
    <text evidence="1">Binds the 23S rRNA.</text>
</comment>
<comment type="cofactor">
    <cofactor evidence="1">
        <name>Zn(2+)</name>
        <dbReference type="ChEBI" id="CHEBI:29105"/>
    </cofactor>
    <text evidence="1">Binds 1 zinc ion per subunit.</text>
</comment>
<comment type="subunit">
    <text evidence="1">Part of the 50S ribosomal subunit.</text>
</comment>
<comment type="similarity">
    <text evidence="1">Belongs to the bacterial ribosomal protein bL31 family. Type A subfamily.</text>
</comment>
<comment type="sequence caution" evidence="2">
    <conflict type="erroneous initiation">
        <sequence resource="EMBL-CDS" id="AAM83891"/>
    </conflict>
</comment>
<reference key="1">
    <citation type="journal article" date="2001" name="Nature">
        <title>Genome sequence of Yersinia pestis, the causative agent of plague.</title>
        <authorList>
            <person name="Parkhill J."/>
            <person name="Wren B.W."/>
            <person name="Thomson N.R."/>
            <person name="Titball R.W."/>
            <person name="Holden M.T.G."/>
            <person name="Prentice M.B."/>
            <person name="Sebaihia M."/>
            <person name="James K.D."/>
            <person name="Churcher C.M."/>
            <person name="Mungall K.L."/>
            <person name="Baker S."/>
            <person name="Basham D."/>
            <person name="Bentley S.D."/>
            <person name="Brooks K."/>
            <person name="Cerdeno-Tarraga A.-M."/>
            <person name="Chillingworth T."/>
            <person name="Cronin A."/>
            <person name="Davies R.M."/>
            <person name="Davis P."/>
            <person name="Dougan G."/>
            <person name="Feltwell T."/>
            <person name="Hamlin N."/>
            <person name="Holroyd S."/>
            <person name="Jagels K."/>
            <person name="Karlyshev A.V."/>
            <person name="Leather S."/>
            <person name="Moule S."/>
            <person name="Oyston P.C.F."/>
            <person name="Quail M.A."/>
            <person name="Rutherford K.M."/>
            <person name="Simmonds M."/>
            <person name="Skelton J."/>
            <person name="Stevens K."/>
            <person name="Whitehead S."/>
            <person name="Barrell B.G."/>
        </authorList>
    </citation>
    <scope>NUCLEOTIDE SEQUENCE [LARGE SCALE GENOMIC DNA]</scope>
    <source>
        <strain>CO-92 / Biovar Orientalis</strain>
    </source>
</reference>
<reference key="2">
    <citation type="journal article" date="2002" name="J. Bacteriol.">
        <title>Genome sequence of Yersinia pestis KIM.</title>
        <authorList>
            <person name="Deng W."/>
            <person name="Burland V."/>
            <person name="Plunkett G. III"/>
            <person name="Boutin A."/>
            <person name="Mayhew G.F."/>
            <person name="Liss P."/>
            <person name="Perna N.T."/>
            <person name="Rose D.J."/>
            <person name="Mau B."/>
            <person name="Zhou S."/>
            <person name="Schwartz D.C."/>
            <person name="Fetherston J.D."/>
            <person name="Lindler L.E."/>
            <person name="Brubaker R.R."/>
            <person name="Plano G.V."/>
            <person name="Straley S.C."/>
            <person name="McDonough K.A."/>
            <person name="Nilles M.L."/>
            <person name="Matson J.S."/>
            <person name="Blattner F.R."/>
            <person name="Perry R.D."/>
        </authorList>
    </citation>
    <scope>NUCLEOTIDE SEQUENCE [LARGE SCALE GENOMIC DNA]</scope>
    <source>
        <strain>KIM10+ / Biovar Mediaevalis</strain>
    </source>
</reference>
<reference key="3">
    <citation type="journal article" date="2004" name="DNA Res.">
        <title>Complete genome sequence of Yersinia pestis strain 91001, an isolate avirulent to humans.</title>
        <authorList>
            <person name="Song Y."/>
            <person name="Tong Z."/>
            <person name="Wang J."/>
            <person name="Wang L."/>
            <person name="Guo Z."/>
            <person name="Han Y."/>
            <person name="Zhang J."/>
            <person name="Pei D."/>
            <person name="Zhou D."/>
            <person name="Qin H."/>
            <person name="Pang X."/>
            <person name="Han Y."/>
            <person name="Zhai J."/>
            <person name="Li M."/>
            <person name="Cui B."/>
            <person name="Qi Z."/>
            <person name="Jin L."/>
            <person name="Dai R."/>
            <person name="Chen F."/>
            <person name="Li S."/>
            <person name="Ye C."/>
            <person name="Du Z."/>
            <person name="Lin W."/>
            <person name="Wang J."/>
            <person name="Yu J."/>
            <person name="Yang H."/>
            <person name="Wang J."/>
            <person name="Huang P."/>
            <person name="Yang R."/>
        </authorList>
    </citation>
    <scope>NUCLEOTIDE SEQUENCE [LARGE SCALE GENOMIC DNA]</scope>
    <source>
        <strain>91001 / Biovar Mediaevalis</strain>
    </source>
</reference>
<sequence length="71" mass="7782">MKQGIHPKYEQVTASCSCGNVIKINSTVGHDLNLDVCGECHPFYTGKQRDVASGGRVDRFNKRFSVPGAKK</sequence>
<name>RL31_YERPE</name>
<protein>
    <recommendedName>
        <fullName evidence="1">Large ribosomal subunit protein bL31</fullName>
    </recommendedName>
    <alternativeName>
        <fullName evidence="2">50S ribosomal protein L31</fullName>
    </alternativeName>
</protein>
<organism>
    <name type="scientific">Yersinia pestis</name>
    <dbReference type="NCBI Taxonomy" id="632"/>
    <lineage>
        <taxon>Bacteria</taxon>
        <taxon>Pseudomonadati</taxon>
        <taxon>Pseudomonadota</taxon>
        <taxon>Gammaproteobacteria</taxon>
        <taxon>Enterobacterales</taxon>
        <taxon>Yersiniaceae</taxon>
        <taxon>Yersinia</taxon>
    </lineage>
</organism>
<feature type="chain" id="PRO_0000173183" description="Large ribosomal subunit protein bL31">
    <location>
        <begin position="1"/>
        <end position="71"/>
    </location>
</feature>
<feature type="binding site" evidence="1">
    <location>
        <position position="16"/>
    </location>
    <ligand>
        <name>Zn(2+)</name>
        <dbReference type="ChEBI" id="CHEBI:29105"/>
    </ligand>
</feature>
<feature type="binding site" evidence="1">
    <location>
        <position position="18"/>
    </location>
    <ligand>
        <name>Zn(2+)</name>
        <dbReference type="ChEBI" id="CHEBI:29105"/>
    </ligand>
</feature>
<feature type="binding site" evidence="1">
    <location>
        <position position="37"/>
    </location>
    <ligand>
        <name>Zn(2+)</name>
        <dbReference type="ChEBI" id="CHEBI:29105"/>
    </ligand>
</feature>
<feature type="binding site" evidence="1">
    <location>
        <position position="40"/>
    </location>
    <ligand>
        <name>Zn(2+)</name>
        <dbReference type="ChEBI" id="CHEBI:29105"/>
    </ligand>
</feature>
<proteinExistence type="inferred from homology"/>